<name>TATD_ERWAE</name>
<feature type="chain" id="PRO_0000412739" description="3'-5' ssDNA/RNA exonuclease TatD">
    <location>
        <begin position="1"/>
        <end position="259"/>
    </location>
</feature>
<feature type="binding site" evidence="1">
    <location>
        <position position="92"/>
    </location>
    <ligand>
        <name>a divalent metal cation</name>
        <dbReference type="ChEBI" id="CHEBI:60240"/>
    </ligand>
</feature>
<feature type="binding site" evidence="1">
    <location>
        <position position="128"/>
    </location>
    <ligand>
        <name>a divalent metal cation</name>
        <dbReference type="ChEBI" id="CHEBI:60240"/>
    </ligand>
</feature>
<feature type="binding site" evidence="1">
    <location>
        <position position="153"/>
    </location>
    <ligand>
        <name>a divalent metal cation</name>
        <dbReference type="ChEBI" id="CHEBI:60240"/>
    </ligand>
</feature>
<gene>
    <name evidence="1" type="primary">tatD</name>
    <name type="ordered locus">EAM_0208</name>
</gene>
<proteinExistence type="inferred from homology"/>
<keyword id="KW-0963">Cytoplasm</keyword>
<keyword id="KW-0269">Exonuclease</keyword>
<keyword id="KW-0378">Hydrolase</keyword>
<keyword id="KW-0460">Magnesium</keyword>
<keyword id="KW-0479">Metal-binding</keyword>
<keyword id="KW-0540">Nuclease</keyword>
<evidence type="ECO:0000255" key="1">
    <source>
        <dbReference type="HAMAP-Rule" id="MF_00901"/>
    </source>
</evidence>
<reference key="1">
    <citation type="journal article" date="2010" name="J. Bacteriol.">
        <title>Complete genome sequence of the plant pathogen Erwinia amylovora strain ATCC 49946.</title>
        <authorList>
            <person name="Sebaihia M."/>
            <person name="Bocsanczy A.M."/>
            <person name="Biehl B.S."/>
            <person name="Quail M.A."/>
            <person name="Perna N.T."/>
            <person name="Glasner J.D."/>
            <person name="DeClerck G.A."/>
            <person name="Cartinhour S."/>
            <person name="Schneider D.J."/>
            <person name="Bentley S.D."/>
            <person name="Parkhill J."/>
            <person name="Beer S.V."/>
        </authorList>
    </citation>
    <scope>NUCLEOTIDE SEQUENCE [LARGE SCALE GENOMIC DNA]</scope>
    <source>
        <strain>ATCC 49946 / CCPPB 0273 / Ea273 / 27-3</strain>
    </source>
</reference>
<protein>
    <recommendedName>
        <fullName evidence="1">3'-5' ssDNA/RNA exonuclease TatD</fullName>
        <ecNumber evidence="1">3.1.11.-</ecNumber>
        <ecNumber evidence="1">3.1.13.-</ecNumber>
    </recommendedName>
    <alternativeName>
        <fullName evidence="1">DNase TatD</fullName>
    </alternativeName>
</protein>
<organism>
    <name type="scientific">Erwinia amylovora (strain ATCC 49946 / CCPPB 0273 / Ea273 / 27-3)</name>
    <dbReference type="NCBI Taxonomy" id="716540"/>
    <lineage>
        <taxon>Bacteria</taxon>
        <taxon>Pseudomonadati</taxon>
        <taxon>Pseudomonadota</taxon>
        <taxon>Gammaproteobacteria</taxon>
        <taxon>Enterobacterales</taxon>
        <taxon>Erwiniaceae</taxon>
        <taxon>Erwinia</taxon>
    </lineage>
</organism>
<comment type="function">
    <text evidence="1">3'-5' exonuclease that prefers single-stranded DNA and RNA. May play a role in the H(2)O(2)-induced DNA damage repair.</text>
</comment>
<comment type="cofactor">
    <cofactor evidence="1">
        <name>Mg(2+)</name>
        <dbReference type="ChEBI" id="CHEBI:18420"/>
    </cofactor>
</comment>
<comment type="subunit">
    <text evidence="1">Monomer.</text>
</comment>
<comment type="subcellular location">
    <subcellularLocation>
        <location evidence="1">Cytoplasm</location>
    </subcellularLocation>
</comment>
<comment type="similarity">
    <text evidence="1">Belongs to the metallo-dependent hydrolases superfamily. TatD-type hydrolase family. TatD subfamily.</text>
</comment>
<dbReference type="EC" id="3.1.11.-" evidence="1"/>
<dbReference type="EC" id="3.1.13.-" evidence="1"/>
<dbReference type="EMBL" id="FN666575">
    <property type="protein sequence ID" value="CBJ44883.1"/>
    <property type="molecule type" value="Genomic_DNA"/>
</dbReference>
<dbReference type="RefSeq" id="WP_004154961.1">
    <property type="nucleotide sequence ID" value="NC_013971.1"/>
</dbReference>
<dbReference type="SMR" id="D4ICL5"/>
<dbReference type="GeneID" id="97607528"/>
<dbReference type="KEGG" id="eay:EAM_0208"/>
<dbReference type="HOGENOM" id="CLU_031506_1_2_6"/>
<dbReference type="GO" id="GO:0005737">
    <property type="term" value="C:cytoplasm"/>
    <property type="evidence" value="ECO:0007669"/>
    <property type="project" value="UniProtKB-SubCell"/>
</dbReference>
<dbReference type="GO" id="GO:0000175">
    <property type="term" value="F:3'-5'-RNA exonuclease activity"/>
    <property type="evidence" value="ECO:0007669"/>
    <property type="project" value="UniProtKB-UniRule"/>
</dbReference>
<dbReference type="GO" id="GO:0000287">
    <property type="term" value="F:magnesium ion binding"/>
    <property type="evidence" value="ECO:0007669"/>
    <property type="project" value="UniProtKB-UniRule"/>
</dbReference>
<dbReference type="GO" id="GO:0008310">
    <property type="term" value="F:single-stranded DNA 3'-5' DNA exonuclease activity"/>
    <property type="evidence" value="ECO:0007669"/>
    <property type="project" value="UniProtKB-UniRule"/>
</dbReference>
<dbReference type="CDD" id="cd01310">
    <property type="entry name" value="TatD_DNAse"/>
    <property type="match status" value="1"/>
</dbReference>
<dbReference type="FunFam" id="3.20.20.140:FF:000018">
    <property type="entry name" value="3'-5' ssDNA/RNA exonuclease TatD"/>
    <property type="match status" value="1"/>
</dbReference>
<dbReference type="Gene3D" id="3.20.20.140">
    <property type="entry name" value="Metal-dependent hydrolases"/>
    <property type="match status" value="1"/>
</dbReference>
<dbReference type="HAMAP" id="MF_00901">
    <property type="entry name" value="TatD_exonuclease"/>
    <property type="match status" value="1"/>
</dbReference>
<dbReference type="InterPro" id="IPR018228">
    <property type="entry name" value="DNase_TatD-rel_CS"/>
</dbReference>
<dbReference type="InterPro" id="IPR024918">
    <property type="entry name" value="Exonuc_TatD"/>
</dbReference>
<dbReference type="InterPro" id="IPR032466">
    <property type="entry name" value="Metal_Hydrolase"/>
</dbReference>
<dbReference type="InterPro" id="IPR001130">
    <property type="entry name" value="TatD-like"/>
</dbReference>
<dbReference type="InterPro" id="IPR050891">
    <property type="entry name" value="TatD-type_Hydrolase"/>
</dbReference>
<dbReference type="NCBIfam" id="NF007745">
    <property type="entry name" value="PRK10425.1"/>
    <property type="match status" value="1"/>
</dbReference>
<dbReference type="PANTHER" id="PTHR10060:SF15">
    <property type="entry name" value="DEOXYRIBONUCLEASE TATDN1"/>
    <property type="match status" value="1"/>
</dbReference>
<dbReference type="PANTHER" id="PTHR10060">
    <property type="entry name" value="TATD FAMILY DEOXYRIBONUCLEASE"/>
    <property type="match status" value="1"/>
</dbReference>
<dbReference type="Pfam" id="PF01026">
    <property type="entry name" value="TatD_DNase"/>
    <property type="match status" value="1"/>
</dbReference>
<dbReference type="PIRSF" id="PIRSF005902">
    <property type="entry name" value="DNase_TatD"/>
    <property type="match status" value="1"/>
</dbReference>
<dbReference type="SUPFAM" id="SSF51556">
    <property type="entry name" value="Metallo-dependent hydrolases"/>
    <property type="match status" value="1"/>
</dbReference>
<dbReference type="PROSITE" id="PS01090">
    <property type="entry name" value="TATD_2"/>
    <property type="match status" value="1"/>
</dbReference>
<dbReference type="PROSITE" id="PS01091">
    <property type="entry name" value="TATD_3"/>
    <property type="match status" value="1"/>
</dbReference>
<sequence length="259" mass="28691">MFDIGVNLTSTQFAKDRDKVVKRAREAGISGMLITGTNALESQQALSLARQHANYCWSTAGVHPHHASEWSAETAATLRRLAESPLVVAIGECGLDFNRNFSQPEQQVYAFNAQLALAAELSLPVFLHCREAHERFITILKPWLPSLKAAVLHCFTGARAELESCLAEGLSIGITGWICDERRGQELRELVPLIPADRLLLETDAPWLLPRDMRPRPPSRRNEPCFLPHIVQQVALLRGDDVDELAAQTALNARALFGL</sequence>
<accession>D4ICL5</accession>